<dbReference type="EMBL" id="CU329670">
    <property type="protein sequence ID" value="CAA22583.1"/>
    <property type="molecule type" value="Genomic_DNA"/>
</dbReference>
<dbReference type="PIR" id="T38996">
    <property type="entry name" value="T38996"/>
</dbReference>
<dbReference type="RefSeq" id="NP_594622.1">
    <property type="nucleotide sequence ID" value="NM_001020050.2"/>
</dbReference>
<dbReference type="SMR" id="O94441"/>
<dbReference type="BioGRID" id="279649">
    <property type="interactions" value="22"/>
</dbReference>
<dbReference type="STRING" id="284812.O94441"/>
<dbReference type="iPTMnet" id="O94441"/>
<dbReference type="PaxDb" id="4896-SPAC637.04.1"/>
<dbReference type="EnsemblFungi" id="SPAC637.04.1">
    <property type="protein sequence ID" value="SPAC637.04.1:pep"/>
    <property type="gene ID" value="SPAC637.04"/>
</dbReference>
<dbReference type="GeneID" id="2543221"/>
<dbReference type="KEGG" id="spo:2543221"/>
<dbReference type="PomBase" id="SPAC637.04">
    <property type="gene designation" value="ypp1"/>
</dbReference>
<dbReference type="VEuPathDB" id="FungiDB:SPAC637.04"/>
<dbReference type="eggNOG" id="KOG4162">
    <property type="taxonomic scope" value="Eukaryota"/>
</dbReference>
<dbReference type="HOGENOM" id="CLU_003276_1_0_1"/>
<dbReference type="InParanoid" id="O94441"/>
<dbReference type="OMA" id="CNGDWQA"/>
<dbReference type="PhylomeDB" id="O94441"/>
<dbReference type="PRO" id="PR:O94441"/>
<dbReference type="Proteomes" id="UP000002485">
    <property type="component" value="Chromosome I"/>
</dbReference>
<dbReference type="GO" id="GO:0032153">
    <property type="term" value="C:cell division site"/>
    <property type="evidence" value="ECO:0007005"/>
    <property type="project" value="PomBase"/>
</dbReference>
<dbReference type="GO" id="GO:0051286">
    <property type="term" value="C:cell tip"/>
    <property type="evidence" value="ECO:0007005"/>
    <property type="project" value="PomBase"/>
</dbReference>
<dbReference type="GO" id="GO:0005829">
    <property type="term" value="C:cytosol"/>
    <property type="evidence" value="ECO:0007005"/>
    <property type="project" value="PomBase"/>
</dbReference>
<dbReference type="GO" id="GO:0005886">
    <property type="term" value="C:plasma membrane"/>
    <property type="evidence" value="ECO:0000314"/>
    <property type="project" value="PomBase"/>
</dbReference>
<dbReference type="GO" id="GO:0006897">
    <property type="term" value="P:endocytosis"/>
    <property type="evidence" value="ECO:0000266"/>
    <property type="project" value="PomBase"/>
</dbReference>
<dbReference type="GO" id="GO:0006886">
    <property type="term" value="P:intracellular protein transport"/>
    <property type="evidence" value="ECO:0000305"/>
    <property type="project" value="PomBase"/>
</dbReference>
<dbReference type="CDD" id="cd23270">
    <property type="entry name" value="YPP1"/>
    <property type="match status" value="1"/>
</dbReference>
<dbReference type="Gene3D" id="1.25.40.10">
    <property type="entry name" value="Tetratricopeptide repeat domain"/>
    <property type="match status" value="2"/>
</dbReference>
<dbReference type="InterPro" id="IPR051722">
    <property type="entry name" value="Endocytosis_PI4K-reg_protein"/>
</dbReference>
<dbReference type="InterPro" id="IPR011990">
    <property type="entry name" value="TPR-like_helical_dom_sf"/>
</dbReference>
<dbReference type="InterPro" id="IPR019734">
    <property type="entry name" value="TPR_rpt"/>
</dbReference>
<dbReference type="PANTHER" id="PTHR23083:SF464">
    <property type="entry name" value="TETRATRICOPEPTIDE REPEAT DOMAIN 7, ISOFORM A"/>
    <property type="match status" value="1"/>
</dbReference>
<dbReference type="PANTHER" id="PTHR23083">
    <property type="entry name" value="TETRATRICOPEPTIDE REPEAT PROTEIN, TPR"/>
    <property type="match status" value="1"/>
</dbReference>
<dbReference type="SMART" id="SM00028">
    <property type="entry name" value="TPR"/>
    <property type="match status" value="4"/>
</dbReference>
<dbReference type="SUPFAM" id="SSF48452">
    <property type="entry name" value="TPR-like"/>
    <property type="match status" value="2"/>
</dbReference>
<dbReference type="PROSITE" id="PS50005">
    <property type="entry name" value="TPR"/>
    <property type="match status" value="5"/>
</dbReference>
<dbReference type="PROSITE" id="PS50293">
    <property type="entry name" value="TPR_REGION"/>
    <property type="match status" value="3"/>
</dbReference>
<name>YPP1_SCHPO</name>
<organism>
    <name type="scientific">Schizosaccharomyces pombe (strain 972 / ATCC 24843)</name>
    <name type="common">Fission yeast</name>
    <dbReference type="NCBI Taxonomy" id="284812"/>
    <lineage>
        <taxon>Eukaryota</taxon>
        <taxon>Fungi</taxon>
        <taxon>Dikarya</taxon>
        <taxon>Ascomycota</taxon>
        <taxon>Taphrinomycotina</taxon>
        <taxon>Schizosaccharomycetes</taxon>
        <taxon>Schizosaccharomycetales</taxon>
        <taxon>Schizosaccharomycetaceae</taxon>
        <taxon>Schizosaccharomyces</taxon>
    </lineage>
</organism>
<accession>O94441</accession>
<feature type="chain" id="PRO_0000363379" description="Putative cargo-transport protein ypp1">
    <location>
        <begin position="1"/>
        <end position="862"/>
    </location>
</feature>
<feature type="repeat" description="TPR 1">
    <location>
        <begin position="342"/>
        <end position="377"/>
    </location>
</feature>
<feature type="repeat" description="TPR 2">
    <location>
        <begin position="460"/>
        <end position="493"/>
    </location>
</feature>
<feature type="repeat" description="TPR 3">
    <location>
        <begin position="494"/>
        <end position="527"/>
    </location>
</feature>
<feature type="repeat" description="TPR 4">
    <location>
        <begin position="665"/>
        <end position="698"/>
    </location>
</feature>
<feature type="repeat" description="TPR 5">
    <location>
        <begin position="705"/>
        <end position="738"/>
    </location>
</feature>
<feature type="repeat" description="TPR 6">
    <location>
        <begin position="740"/>
        <end position="772"/>
    </location>
</feature>
<feature type="repeat" description="TPR 7">
    <location>
        <begin position="814"/>
        <end position="847"/>
    </location>
</feature>
<feature type="modified residue" description="Phosphoserine" evidence="3">
    <location>
        <position position="632"/>
    </location>
</feature>
<feature type="modified residue" description="Phosphoserine" evidence="3">
    <location>
        <position position="633"/>
    </location>
</feature>
<feature type="modified residue" description="Phosphoserine" evidence="3">
    <location>
        <position position="637"/>
    </location>
</feature>
<keyword id="KW-0963">Cytoplasm</keyword>
<keyword id="KW-0597">Phosphoprotein</keyword>
<keyword id="KW-1185">Reference proteome</keyword>
<keyword id="KW-0677">Repeat</keyword>
<keyword id="KW-0802">TPR repeat</keyword>
<sequence length="862" mass="98307">MFSAKAKTYELKLEQTRCNGDWQAIPEVARKLHKHNSSKSFVCELAKIEASLKSALTAELKNIANVLEPKLIDNQYSLIPALPSARTDPLLSQLNSLNIQNATEDEKLQETSIRLLLYIVQRKFPEAVDLDWSPQGIPWTETSTGICILQATVLSSLAQYAQANDEVAYQYVRSAIGLIQNANIGKKPLPELTRWCDLAYSLYAQMSVSACSSQLERANILTTCLSYFTEHKSVNLLYKLVTSRQAIKYLEHILRTNTNGSKIFTKSPVKNLYLNWPQLVLDYGSLLCNFTSFPKAGDQNMFAVEFIELATSIWINTEKSYDITVSLIRMLYQLTGKCFQAQQIFRSLVFFLRHIEEFEEASEAFEIYKFLCVKSHERLARKNSDVAGSFSDIKPVFVDEPKSIIEVCSVMMTVYAQYLRNLKKVSEILDYITKIASDYDLLKRDDIAPLIYHTEGVAYSFMYYQANNPSLRERYHQKSVQSYQKCLEKQPTNTNALFHLAMQYSERRAITDAMQIVRRLLEVNPKYSIVSWHLLVLCVSCSEQYAAGIKLIDSVFETWGINHVNEDGTIEISLTNLTFNDRCALVDLLITKLALFEAEKGVEATLDIQDEIFTLFASIFDLNEYRISKEGSSDELSTLLERSTIQSIKSSKKISKDVENEKGSILGFSRKSSLKRSTVLSKKSHSSYKENFQLRRGKTVSYLNQKLWLTAASLFLKSGNDDQARSALLEAKKIDHECAWVYYLNGLSLLQQGKEVEGYEQLDVAHYLDPEDPLISTALAKCLLQGGYGPMHSRRNRADAILSSCTLQYGWDLPEAWYYTAEIFRQLGDLKQAAFSYDYCIQLADTNPVRRWSNLQPRFMNV</sequence>
<gene>
    <name type="primary">ypp1</name>
    <name type="ORF">SPAC637.04</name>
</gene>
<proteinExistence type="evidence at protein level"/>
<comment type="function">
    <text evidence="1">Involved in endocytosis.</text>
</comment>
<comment type="subcellular location">
    <subcellularLocation>
        <location evidence="2">Cytoplasm</location>
    </subcellularLocation>
    <text>Found at the cell tip and the barrier septum.</text>
</comment>
<comment type="similarity">
    <text evidence="4">Belongs to the YPP1 family.</text>
</comment>
<reference key="1">
    <citation type="journal article" date="2002" name="Nature">
        <title>The genome sequence of Schizosaccharomyces pombe.</title>
        <authorList>
            <person name="Wood V."/>
            <person name="Gwilliam R."/>
            <person name="Rajandream M.A."/>
            <person name="Lyne M.H."/>
            <person name="Lyne R."/>
            <person name="Stewart A."/>
            <person name="Sgouros J.G."/>
            <person name="Peat N."/>
            <person name="Hayles J."/>
            <person name="Baker S.G."/>
            <person name="Basham D."/>
            <person name="Bowman S."/>
            <person name="Brooks K."/>
            <person name="Brown D."/>
            <person name="Brown S."/>
            <person name="Chillingworth T."/>
            <person name="Churcher C.M."/>
            <person name="Collins M."/>
            <person name="Connor R."/>
            <person name="Cronin A."/>
            <person name="Davis P."/>
            <person name="Feltwell T."/>
            <person name="Fraser A."/>
            <person name="Gentles S."/>
            <person name="Goble A."/>
            <person name="Hamlin N."/>
            <person name="Harris D.E."/>
            <person name="Hidalgo J."/>
            <person name="Hodgson G."/>
            <person name="Holroyd S."/>
            <person name="Hornsby T."/>
            <person name="Howarth S."/>
            <person name="Huckle E.J."/>
            <person name="Hunt S."/>
            <person name="Jagels K."/>
            <person name="James K.D."/>
            <person name="Jones L."/>
            <person name="Jones M."/>
            <person name="Leather S."/>
            <person name="McDonald S."/>
            <person name="McLean J."/>
            <person name="Mooney P."/>
            <person name="Moule S."/>
            <person name="Mungall K.L."/>
            <person name="Murphy L.D."/>
            <person name="Niblett D."/>
            <person name="Odell C."/>
            <person name="Oliver K."/>
            <person name="O'Neil S."/>
            <person name="Pearson D."/>
            <person name="Quail M.A."/>
            <person name="Rabbinowitsch E."/>
            <person name="Rutherford K.M."/>
            <person name="Rutter S."/>
            <person name="Saunders D."/>
            <person name="Seeger K."/>
            <person name="Sharp S."/>
            <person name="Skelton J."/>
            <person name="Simmonds M.N."/>
            <person name="Squares R."/>
            <person name="Squares S."/>
            <person name="Stevens K."/>
            <person name="Taylor K."/>
            <person name="Taylor R.G."/>
            <person name="Tivey A."/>
            <person name="Walsh S.V."/>
            <person name="Warren T."/>
            <person name="Whitehead S."/>
            <person name="Woodward J.R."/>
            <person name="Volckaert G."/>
            <person name="Aert R."/>
            <person name="Robben J."/>
            <person name="Grymonprez B."/>
            <person name="Weltjens I."/>
            <person name="Vanstreels E."/>
            <person name="Rieger M."/>
            <person name="Schaefer M."/>
            <person name="Mueller-Auer S."/>
            <person name="Gabel C."/>
            <person name="Fuchs M."/>
            <person name="Duesterhoeft A."/>
            <person name="Fritzc C."/>
            <person name="Holzer E."/>
            <person name="Moestl D."/>
            <person name="Hilbert H."/>
            <person name="Borzym K."/>
            <person name="Langer I."/>
            <person name="Beck A."/>
            <person name="Lehrach H."/>
            <person name="Reinhardt R."/>
            <person name="Pohl T.M."/>
            <person name="Eger P."/>
            <person name="Zimmermann W."/>
            <person name="Wedler H."/>
            <person name="Wambutt R."/>
            <person name="Purnelle B."/>
            <person name="Goffeau A."/>
            <person name="Cadieu E."/>
            <person name="Dreano S."/>
            <person name="Gloux S."/>
            <person name="Lelaure V."/>
            <person name="Mottier S."/>
            <person name="Galibert F."/>
            <person name="Aves S.J."/>
            <person name="Xiang Z."/>
            <person name="Hunt C."/>
            <person name="Moore K."/>
            <person name="Hurst S.M."/>
            <person name="Lucas M."/>
            <person name="Rochet M."/>
            <person name="Gaillardin C."/>
            <person name="Tallada V.A."/>
            <person name="Garzon A."/>
            <person name="Thode G."/>
            <person name="Daga R.R."/>
            <person name="Cruzado L."/>
            <person name="Jimenez J."/>
            <person name="Sanchez M."/>
            <person name="del Rey F."/>
            <person name="Benito J."/>
            <person name="Dominguez A."/>
            <person name="Revuelta J.L."/>
            <person name="Moreno S."/>
            <person name="Armstrong J."/>
            <person name="Forsburg S.L."/>
            <person name="Cerutti L."/>
            <person name="Lowe T."/>
            <person name="McCombie W.R."/>
            <person name="Paulsen I."/>
            <person name="Potashkin J."/>
            <person name="Shpakovski G.V."/>
            <person name="Ussery D."/>
            <person name="Barrell B.G."/>
            <person name="Nurse P."/>
        </authorList>
    </citation>
    <scope>NUCLEOTIDE SEQUENCE [LARGE SCALE GENOMIC DNA]</scope>
    <source>
        <strain>972 / ATCC 24843</strain>
    </source>
</reference>
<reference key="2">
    <citation type="journal article" date="2006" name="Nat. Biotechnol.">
        <title>ORFeome cloning and global analysis of protein localization in the fission yeast Schizosaccharomyces pombe.</title>
        <authorList>
            <person name="Matsuyama A."/>
            <person name="Arai R."/>
            <person name="Yashiroda Y."/>
            <person name="Shirai A."/>
            <person name="Kamata A."/>
            <person name="Sekido S."/>
            <person name="Kobayashi Y."/>
            <person name="Hashimoto A."/>
            <person name="Hamamoto M."/>
            <person name="Hiraoka Y."/>
            <person name="Horinouchi S."/>
            <person name="Yoshida M."/>
        </authorList>
    </citation>
    <scope>SUBCELLULAR LOCATION [LARGE SCALE ANALYSIS]</scope>
</reference>
<reference key="3">
    <citation type="journal article" date="2008" name="J. Proteome Res.">
        <title>Phosphoproteome analysis of fission yeast.</title>
        <authorList>
            <person name="Wilson-Grady J.T."/>
            <person name="Villen J."/>
            <person name="Gygi S.P."/>
        </authorList>
    </citation>
    <scope>PHOSPHORYLATION [LARGE SCALE ANALYSIS] AT SER-632; SER-633 AND SER-637</scope>
    <scope>IDENTIFICATION BY MASS SPECTROMETRY</scope>
</reference>
<evidence type="ECO:0000250" key="1"/>
<evidence type="ECO:0000269" key="2">
    <source>
    </source>
</evidence>
<evidence type="ECO:0000269" key="3">
    <source>
    </source>
</evidence>
<evidence type="ECO:0000305" key="4"/>
<protein>
    <recommendedName>
        <fullName>Putative cargo-transport protein ypp1</fullName>
    </recommendedName>
</protein>